<comment type="function">
    <text evidence="1">Electron carrier protein. The oxidized form of the cytochrome c heme group can accept an electron from the heme group of the cytochrome c1 subunit of cytochrome reductase. Cytochrome c then transfers this electron to the cytochrome oxidase complex, the final protein carrier in the mitochondrial electron-transport chain (By similarity).</text>
</comment>
<comment type="subcellular location">
    <subcellularLocation>
        <location evidence="1">Mitochondrion intermembrane space</location>
    </subcellularLocation>
</comment>
<comment type="PTM">
    <text evidence="1">Binds 1 heme c group covalently per subunit.</text>
</comment>
<comment type="similarity">
    <text evidence="3">Belongs to the cytochrome c family.</text>
</comment>
<comment type="online information" name="Protein Spotlight">
    <link uri="https://www.proteinspotlight.org/back_issues/076"/>
    <text>Life shuttle - Issue 76 of November 2006</text>
</comment>
<dbReference type="EMBL" id="AF047169">
    <property type="protein sequence ID" value="AAD02430.1"/>
    <property type="molecule type" value="Genomic_DNA"/>
</dbReference>
<dbReference type="SMR" id="O93863"/>
<dbReference type="GO" id="GO:0005758">
    <property type="term" value="C:mitochondrial intermembrane space"/>
    <property type="evidence" value="ECO:0007669"/>
    <property type="project" value="UniProtKB-SubCell"/>
</dbReference>
<dbReference type="GO" id="GO:0009055">
    <property type="term" value="F:electron transfer activity"/>
    <property type="evidence" value="ECO:0007669"/>
    <property type="project" value="InterPro"/>
</dbReference>
<dbReference type="GO" id="GO:0020037">
    <property type="term" value="F:heme binding"/>
    <property type="evidence" value="ECO:0007669"/>
    <property type="project" value="InterPro"/>
</dbReference>
<dbReference type="GO" id="GO:0046872">
    <property type="term" value="F:metal ion binding"/>
    <property type="evidence" value="ECO:0007669"/>
    <property type="project" value="UniProtKB-KW"/>
</dbReference>
<dbReference type="FunFam" id="1.10.760.10:FF:000001">
    <property type="entry name" value="Cytochrome c iso-1"/>
    <property type="match status" value="1"/>
</dbReference>
<dbReference type="Gene3D" id="1.10.760.10">
    <property type="entry name" value="Cytochrome c-like domain"/>
    <property type="match status" value="1"/>
</dbReference>
<dbReference type="InterPro" id="IPR009056">
    <property type="entry name" value="Cyt_c-like_dom"/>
</dbReference>
<dbReference type="InterPro" id="IPR036909">
    <property type="entry name" value="Cyt_c-like_dom_sf"/>
</dbReference>
<dbReference type="InterPro" id="IPR002327">
    <property type="entry name" value="Cyt_c_1A/1B"/>
</dbReference>
<dbReference type="PANTHER" id="PTHR11961">
    <property type="entry name" value="CYTOCHROME C"/>
    <property type="match status" value="1"/>
</dbReference>
<dbReference type="Pfam" id="PF00034">
    <property type="entry name" value="Cytochrom_C"/>
    <property type="match status" value="1"/>
</dbReference>
<dbReference type="PRINTS" id="PR00604">
    <property type="entry name" value="CYTCHRMECIAB"/>
</dbReference>
<dbReference type="SUPFAM" id="SSF46626">
    <property type="entry name" value="Cytochrome c"/>
    <property type="match status" value="1"/>
</dbReference>
<dbReference type="PROSITE" id="PS51007">
    <property type="entry name" value="CYTC"/>
    <property type="match status" value="1"/>
</dbReference>
<accession>O93863</accession>
<gene>
    <name type="primary">CYC1</name>
</gene>
<organism>
    <name type="scientific">Pachysolen tannophilus</name>
    <name type="common">Yeast</name>
    <dbReference type="NCBI Taxonomy" id="4918"/>
    <lineage>
        <taxon>Eukaryota</taxon>
        <taxon>Fungi</taxon>
        <taxon>Dikarya</taxon>
        <taxon>Ascomycota</taxon>
        <taxon>Saccharomycotina</taxon>
        <taxon>Pichiomycetes</taxon>
        <taxon>Pachysolenaceae</taxon>
        <taxon>Pachysolen</taxon>
    </lineage>
</organism>
<proteinExistence type="inferred from homology"/>
<feature type="initiator methionine" description="Removed" evidence="1">
    <location>
        <position position="1"/>
    </location>
</feature>
<feature type="chain" id="PRO_0000108329" description="Cytochrome c">
    <location>
        <begin position="2"/>
        <end position="110"/>
    </location>
</feature>
<feature type="binding site" description="covalent" evidence="2">
    <location>
        <position position="21"/>
    </location>
    <ligand>
        <name>heme c</name>
        <dbReference type="ChEBI" id="CHEBI:61717"/>
    </ligand>
</feature>
<feature type="binding site" description="covalent" evidence="2">
    <location>
        <position position="24"/>
    </location>
    <ligand>
        <name>heme c</name>
        <dbReference type="ChEBI" id="CHEBI:61717"/>
    </ligand>
</feature>
<feature type="binding site" description="axial binding residue" evidence="2">
    <location>
        <position position="25"/>
    </location>
    <ligand>
        <name>heme c</name>
        <dbReference type="ChEBI" id="CHEBI:61717"/>
    </ligand>
    <ligandPart>
        <name>Fe</name>
        <dbReference type="ChEBI" id="CHEBI:18248"/>
    </ligandPart>
</feature>
<feature type="binding site" description="axial binding residue" evidence="2">
    <location>
        <position position="87"/>
    </location>
    <ligand>
        <name>heme c</name>
        <dbReference type="ChEBI" id="CHEBI:61717"/>
    </ligand>
    <ligandPart>
        <name>Fe</name>
        <dbReference type="ChEBI" id="CHEBI:18248"/>
    </ligandPart>
</feature>
<feature type="modified residue" description="N6,N6,N6-trimethyllysine" evidence="1">
    <location>
        <position position="79"/>
    </location>
</feature>
<protein>
    <recommendedName>
        <fullName>Cytochrome c</fullName>
    </recommendedName>
</protein>
<evidence type="ECO:0000250" key="1"/>
<evidence type="ECO:0000255" key="2">
    <source>
        <dbReference type="PROSITE-ProRule" id="PRU00433"/>
    </source>
</evidence>
<evidence type="ECO:0000305" key="3"/>
<sequence length="110" mass="11943">MPAPYEKGSAKKGATLFKTRCLQCHTTEAGGAHKVGPNLNGVFGRHSGQAEGYSYTDANKQKGALWEAQTMSDYLENPKKYIPGTKMAFGGLKKAKDRNDLVTYLLSATK</sequence>
<reference key="1">
    <citation type="submission" date="1998-02" db="EMBL/GenBank/DDBJ databases">
        <authorList>
            <person name="Clark-Walker G.D."/>
        </authorList>
    </citation>
    <scope>NUCLEOTIDE SEQUENCE [GENOMIC DNA]</scope>
</reference>
<keyword id="KW-0249">Electron transport</keyword>
<keyword id="KW-0349">Heme</keyword>
<keyword id="KW-0408">Iron</keyword>
<keyword id="KW-0479">Metal-binding</keyword>
<keyword id="KW-0488">Methylation</keyword>
<keyword id="KW-0496">Mitochondrion</keyword>
<keyword id="KW-0679">Respiratory chain</keyword>
<keyword id="KW-0813">Transport</keyword>
<name>CYC_PACTA</name>